<organism>
    <name type="scientific">Mus musculus</name>
    <name type="common">Mouse</name>
    <dbReference type="NCBI Taxonomy" id="10090"/>
    <lineage>
        <taxon>Eukaryota</taxon>
        <taxon>Metazoa</taxon>
        <taxon>Chordata</taxon>
        <taxon>Craniata</taxon>
        <taxon>Vertebrata</taxon>
        <taxon>Euteleostomi</taxon>
        <taxon>Mammalia</taxon>
        <taxon>Eutheria</taxon>
        <taxon>Euarchontoglires</taxon>
        <taxon>Glires</taxon>
        <taxon>Rodentia</taxon>
        <taxon>Myomorpha</taxon>
        <taxon>Muroidea</taxon>
        <taxon>Muridae</taxon>
        <taxon>Murinae</taxon>
        <taxon>Mus</taxon>
        <taxon>Mus</taxon>
    </lineage>
</organism>
<comment type="function">
    <text evidence="2 8 9">Cyclic nucleotide phosphodiesterase with a dual-specificity for the second messengers cAMP and cGMP, which are key regulators of many important physiological processes (PubMed:10454575). Regulates angiogenesis by inhibiting the cAMP-dependent guanine nucleotide exchange factor RAPGEF3 and downstream phosphatidylinositol 3-kinase gamma-mediated signaling (By similarity). Controls cardiac contractility by reducing cAMP concentration in cardiocytes (PubMed:15294162).</text>
</comment>
<comment type="catalytic activity">
    <reaction evidence="8">
        <text>a nucleoside 3',5'-cyclic phosphate + H2O = a nucleoside 5'-phosphate + H(+)</text>
        <dbReference type="Rhea" id="RHEA:14653"/>
        <dbReference type="ChEBI" id="CHEBI:15377"/>
        <dbReference type="ChEBI" id="CHEBI:15378"/>
        <dbReference type="ChEBI" id="CHEBI:57867"/>
        <dbReference type="ChEBI" id="CHEBI:58464"/>
        <dbReference type="EC" id="3.1.4.17"/>
    </reaction>
    <physiologicalReaction direction="left-to-right" evidence="13">
        <dbReference type="Rhea" id="RHEA:14654"/>
    </physiologicalReaction>
</comment>
<comment type="catalytic activity">
    <reaction evidence="8">
        <text>3',5'-cyclic AMP + H2O = AMP + H(+)</text>
        <dbReference type="Rhea" id="RHEA:25277"/>
        <dbReference type="ChEBI" id="CHEBI:15377"/>
        <dbReference type="ChEBI" id="CHEBI:15378"/>
        <dbReference type="ChEBI" id="CHEBI:58165"/>
        <dbReference type="ChEBI" id="CHEBI:456215"/>
    </reaction>
    <physiologicalReaction direction="left-to-right" evidence="13">
        <dbReference type="Rhea" id="RHEA:25278"/>
    </physiologicalReaction>
</comment>
<comment type="catalytic activity">
    <reaction evidence="4">
        <text>3',5'-cyclic GMP + H2O = GMP + H(+)</text>
        <dbReference type="Rhea" id="RHEA:16957"/>
        <dbReference type="ChEBI" id="CHEBI:15377"/>
        <dbReference type="ChEBI" id="CHEBI:15378"/>
        <dbReference type="ChEBI" id="CHEBI:57746"/>
        <dbReference type="ChEBI" id="CHEBI:58115"/>
    </reaction>
    <physiologicalReaction direction="left-to-right" evidence="4">
        <dbReference type="Rhea" id="RHEA:16958"/>
    </physiologicalReaction>
</comment>
<comment type="cofactor">
    <cofactor evidence="2">
        <name>Mg(2+)</name>
        <dbReference type="ChEBI" id="CHEBI:18420"/>
    </cofactor>
    <text evidence="2">Binds 2 divalent metal cations per subunit.</text>
</comment>
<comment type="cofactor">
    <cofactor evidence="3">
        <name>Mn(2+)</name>
        <dbReference type="ChEBI" id="CHEBI:29035"/>
    </cofactor>
    <text evidence="3">Binds 2 divalent metal cations per subunit.</text>
</comment>
<comment type="activity regulation">
    <text evidence="4">Inhibited by cGMP.</text>
</comment>
<comment type="subunit">
    <text evidence="2 9 10">Homodimer (By similarity). Interacts with PIK3CG; regulates PDE3B activity and thereby cAMP levels in cells (PubMed:15294162). Interacts with RAPGEF3 and PIK3R6; form a signaling complex that regulates phosphatidylinositol 3-kinase gamma in angiogenesis (By similarity). Interacts with ABHD15; this interaction regulates PDE3B's stability and expression and, thereby, impacts the antilipolytic action of insulin (PubMed:29768196).</text>
</comment>
<comment type="subcellular location">
    <subcellularLocation>
        <location evidence="8">Membrane</location>
        <topology evidence="5">Multi-pass membrane protein</topology>
    </subcellularLocation>
</comment>
<comment type="tissue specificity">
    <text evidence="11">Abundant in adipose tissues.</text>
</comment>
<comment type="PTM">
    <text evidence="8">Phosphorylation at Ser-273 mediates insulin-induced activation of PDE3B.</text>
</comment>
<comment type="similarity">
    <text evidence="12">Belongs to the cyclic nucleotide phosphodiesterase family. PDE3 subfamily.</text>
</comment>
<dbReference type="EC" id="3.1.4.17" evidence="8"/>
<dbReference type="EMBL" id="AJ132271">
    <property type="protein sequence ID" value="CAA10639.1"/>
    <property type="molecule type" value="mRNA"/>
</dbReference>
<dbReference type="EMBL" id="AF547435">
    <property type="protein sequence ID" value="AAN52086.1"/>
    <property type="molecule type" value="mRNA"/>
</dbReference>
<dbReference type="EMBL" id="X95521">
    <property type="protein sequence ID" value="CAA64775.1"/>
    <property type="molecule type" value="mRNA"/>
</dbReference>
<dbReference type="RefSeq" id="NP_035185.2">
    <property type="nucleotide sequence ID" value="NM_011055.2"/>
</dbReference>
<dbReference type="SMR" id="Q61409"/>
<dbReference type="FunCoup" id="Q61409">
    <property type="interactions" value="952"/>
</dbReference>
<dbReference type="STRING" id="10090.ENSMUSP00000032909"/>
<dbReference type="iPTMnet" id="Q61409"/>
<dbReference type="PhosphoSitePlus" id="Q61409"/>
<dbReference type="jPOST" id="Q61409"/>
<dbReference type="PaxDb" id="10090-ENSMUSP00000032909"/>
<dbReference type="ProteomicsDB" id="287805"/>
<dbReference type="DNASU" id="18576"/>
<dbReference type="GeneID" id="18576"/>
<dbReference type="KEGG" id="mmu:18576"/>
<dbReference type="AGR" id="MGI:1333863"/>
<dbReference type="CTD" id="5140"/>
<dbReference type="MGI" id="MGI:1333863">
    <property type="gene designation" value="Pde3b"/>
</dbReference>
<dbReference type="eggNOG" id="ENOG502QSV8">
    <property type="taxonomic scope" value="Eukaryota"/>
</dbReference>
<dbReference type="InParanoid" id="Q61409"/>
<dbReference type="OrthoDB" id="546632at2759"/>
<dbReference type="PhylomeDB" id="Q61409"/>
<dbReference type="Reactome" id="R-MMU-165160">
    <property type="pathway name" value="PDE3B signalling"/>
</dbReference>
<dbReference type="Reactome" id="R-MMU-418555">
    <property type="pathway name" value="G alpha (s) signalling events"/>
</dbReference>
<dbReference type="BioGRID-ORCS" id="18576">
    <property type="hits" value="3 hits in 78 CRISPR screens"/>
</dbReference>
<dbReference type="ChiTaRS" id="Pde3b">
    <property type="organism name" value="mouse"/>
</dbReference>
<dbReference type="PRO" id="PR:Q61409"/>
<dbReference type="Proteomes" id="UP000000589">
    <property type="component" value="Unplaced"/>
</dbReference>
<dbReference type="RNAct" id="Q61409">
    <property type="molecule type" value="protein"/>
</dbReference>
<dbReference type="GO" id="GO:0005829">
    <property type="term" value="C:cytosol"/>
    <property type="evidence" value="ECO:0000304"/>
    <property type="project" value="Reactome"/>
</dbReference>
<dbReference type="GO" id="GO:0005783">
    <property type="term" value="C:endoplasmic reticulum"/>
    <property type="evidence" value="ECO:0000314"/>
    <property type="project" value="BHF-UCL"/>
</dbReference>
<dbReference type="GO" id="GO:0005794">
    <property type="term" value="C:Golgi apparatus"/>
    <property type="evidence" value="ECO:0000314"/>
    <property type="project" value="BHF-UCL"/>
</dbReference>
<dbReference type="GO" id="GO:0016020">
    <property type="term" value="C:membrane"/>
    <property type="evidence" value="ECO:0000314"/>
    <property type="project" value="UniProtKB"/>
</dbReference>
<dbReference type="GO" id="GO:0004115">
    <property type="term" value="F:3',5'-cyclic-AMP phosphodiesterase activity"/>
    <property type="evidence" value="ECO:0000314"/>
    <property type="project" value="UniProtKB"/>
</dbReference>
<dbReference type="GO" id="GO:0047555">
    <property type="term" value="F:3',5'-cyclic-GMP phosphodiesterase activity"/>
    <property type="evidence" value="ECO:0007669"/>
    <property type="project" value="RHEA"/>
</dbReference>
<dbReference type="GO" id="GO:0046872">
    <property type="term" value="F:metal ion binding"/>
    <property type="evidence" value="ECO:0007669"/>
    <property type="project" value="UniProtKB-KW"/>
</dbReference>
<dbReference type="GO" id="GO:0043422">
    <property type="term" value="F:protein kinase B binding"/>
    <property type="evidence" value="ECO:0000353"/>
    <property type="project" value="BHF-UCL"/>
</dbReference>
<dbReference type="GO" id="GO:0001525">
    <property type="term" value="P:angiogenesis"/>
    <property type="evidence" value="ECO:0007669"/>
    <property type="project" value="UniProtKB-KW"/>
</dbReference>
<dbReference type="GO" id="GO:0032869">
    <property type="term" value="P:cellular response to insulin stimulus"/>
    <property type="evidence" value="ECO:0000270"/>
    <property type="project" value="BHF-UCL"/>
</dbReference>
<dbReference type="GO" id="GO:0031018">
    <property type="term" value="P:endocrine pancreas development"/>
    <property type="evidence" value="ECO:0000314"/>
    <property type="project" value="MGI"/>
</dbReference>
<dbReference type="GO" id="GO:0042593">
    <property type="term" value="P:glucose homeostasis"/>
    <property type="evidence" value="ECO:0000314"/>
    <property type="project" value="MGI"/>
</dbReference>
<dbReference type="GO" id="GO:0016525">
    <property type="term" value="P:negative regulation of angiogenesis"/>
    <property type="evidence" value="ECO:0000250"/>
    <property type="project" value="UniProtKB"/>
</dbReference>
<dbReference type="GO" id="GO:0050796">
    <property type="term" value="P:regulation of insulin secretion"/>
    <property type="evidence" value="ECO:0000314"/>
    <property type="project" value="MGI"/>
</dbReference>
<dbReference type="GO" id="GO:0007165">
    <property type="term" value="P:signal transduction"/>
    <property type="evidence" value="ECO:0007669"/>
    <property type="project" value="InterPro"/>
</dbReference>
<dbReference type="CDD" id="cd00077">
    <property type="entry name" value="HDc"/>
    <property type="match status" value="1"/>
</dbReference>
<dbReference type="FunFam" id="1.10.1300.10:FF:000008">
    <property type="entry name" value="Phosphodiesterase"/>
    <property type="match status" value="1"/>
</dbReference>
<dbReference type="Gene3D" id="1.10.1300.10">
    <property type="entry name" value="3'5'-cyclic nucleotide phosphodiesterase, catalytic domain"/>
    <property type="match status" value="1"/>
</dbReference>
<dbReference type="InterPro" id="IPR003607">
    <property type="entry name" value="HD/PDEase_dom"/>
</dbReference>
<dbReference type="InterPro" id="IPR002073">
    <property type="entry name" value="PDEase_catalytic_dom"/>
</dbReference>
<dbReference type="InterPro" id="IPR036971">
    <property type="entry name" value="PDEase_catalytic_dom_sf"/>
</dbReference>
<dbReference type="InterPro" id="IPR023174">
    <property type="entry name" value="PDEase_CS"/>
</dbReference>
<dbReference type="PANTHER" id="PTHR11347">
    <property type="entry name" value="CYCLIC NUCLEOTIDE PHOSPHODIESTERASE"/>
    <property type="match status" value="1"/>
</dbReference>
<dbReference type="Pfam" id="PF00233">
    <property type="entry name" value="PDEase_I"/>
    <property type="match status" value="1"/>
</dbReference>
<dbReference type="SMART" id="SM00471">
    <property type="entry name" value="HDc"/>
    <property type="match status" value="1"/>
</dbReference>
<dbReference type="SUPFAM" id="SSF109604">
    <property type="entry name" value="HD-domain/PDEase-like"/>
    <property type="match status" value="1"/>
</dbReference>
<dbReference type="PROSITE" id="PS00126">
    <property type="entry name" value="PDEASE_I_1"/>
    <property type="match status" value="1"/>
</dbReference>
<dbReference type="PROSITE" id="PS51845">
    <property type="entry name" value="PDEASE_I_2"/>
    <property type="match status" value="1"/>
</dbReference>
<gene>
    <name evidence="14" type="primary">Pde3b</name>
</gene>
<name>PDE3B_MOUSE</name>
<evidence type="ECO:0000250" key="1">
    <source>
        <dbReference type="UniProtKB" id="O76083"/>
    </source>
</evidence>
<evidence type="ECO:0000250" key="2">
    <source>
        <dbReference type="UniProtKB" id="Q13370"/>
    </source>
</evidence>
<evidence type="ECO:0000250" key="3">
    <source>
        <dbReference type="UniProtKB" id="Q14432"/>
    </source>
</evidence>
<evidence type="ECO:0000250" key="4">
    <source>
        <dbReference type="UniProtKB" id="Q63085"/>
    </source>
</evidence>
<evidence type="ECO:0000255" key="5"/>
<evidence type="ECO:0000255" key="6">
    <source>
        <dbReference type="PROSITE-ProRule" id="PRU01192"/>
    </source>
</evidence>
<evidence type="ECO:0000256" key="7">
    <source>
        <dbReference type="SAM" id="MobiDB-lite"/>
    </source>
</evidence>
<evidence type="ECO:0000269" key="8">
    <source>
    </source>
</evidence>
<evidence type="ECO:0000269" key="9">
    <source>
    </source>
</evidence>
<evidence type="ECO:0000269" key="10">
    <source>
    </source>
</evidence>
<evidence type="ECO:0000269" key="11">
    <source>
    </source>
</evidence>
<evidence type="ECO:0000305" key="12"/>
<evidence type="ECO:0000305" key="13">
    <source>
    </source>
</evidence>
<evidence type="ECO:0000312" key="14">
    <source>
        <dbReference type="MGI" id="MGI:1333863"/>
    </source>
</evidence>
<evidence type="ECO:0007744" key="15">
    <source>
    </source>
</evidence>
<protein>
    <recommendedName>
        <fullName evidence="13">cGMP-inhibited 3',5'-cyclic phosphodiesterase 3B</fullName>
        <ecNumber evidence="8">3.1.4.17</ecNumber>
    </recommendedName>
    <alternativeName>
        <fullName>CGIPDE1</fullName>
    </alternativeName>
    <alternativeName>
        <fullName>Cyclic GMP-inhibited phosphodiesterase B</fullName>
        <shortName>CGI-PDE B</shortName>
    </alternativeName>
</protein>
<feature type="chain" id="PRO_0000198803" description="cGMP-inhibited 3',5'-cyclic phosphodiesterase 3B">
    <location>
        <begin position="1"/>
        <end position="1100"/>
    </location>
</feature>
<feature type="transmembrane region" description="Helical" evidence="5">
    <location>
        <begin position="69"/>
        <end position="89"/>
    </location>
</feature>
<feature type="transmembrane region" description="Helical" evidence="5">
    <location>
        <begin position="110"/>
        <end position="130"/>
    </location>
</feature>
<feature type="transmembrane region" description="Helical" evidence="5">
    <location>
        <begin position="140"/>
        <end position="160"/>
    </location>
</feature>
<feature type="transmembrane region" description="Helical" evidence="5">
    <location>
        <begin position="170"/>
        <end position="190"/>
    </location>
</feature>
<feature type="transmembrane region" description="Helical" evidence="5">
    <location>
        <begin position="198"/>
        <end position="218"/>
    </location>
</feature>
<feature type="transmembrane region" description="Helical" evidence="5">
    <location>
        <begin position="225"/>
        <end position="245"/>
    </location>
</feature>
<feature type="domain" description="PDEase" evidence="6">
    <location>
        <begin position="627"/>
        <end position="1061"/>
    </location>
</feature>
<feature type="region of interest" description="Disordered" evidence="7">
    <location>
        <begin position="1"/>
        <end position="29"/>
    </location>
</feature>
<feature type="region of interest" description="Interaction with RAPGEF3" evidence="2">
    <location>
        <begin position="1"/>
        <end position="28"/>
    </location>
</feature>
<feature type="region of interest" description="Disordered" evidence="7">
    <location>
        <begin position="400"/>
        <end position="423"/>
    </location>
</feature>
<feature type="region of interest" description="Interaction with PIK3R6" evidence="2">
    <location>
        <begin position="415"/>
        <end position="439"/>
    </location>
</feature>
<feature type="region of interest" description="Disordered" evidence="7">
    <location>
        <begin position="570"/>
        <end position="590"/>
    </location>
</feature>
<feature type="region of interest" description="Disordered" evidence="7">
    <location>
        <begin position="993"/>
        <end position="1033"/>
    </location>
</feature>
<feature type="coiled-coil region" evidence="5">
    <location>
        <begin position="1044"/>
        <end position="1079"/>
    </location>
</feature>
<feature type="compositionally biased region" description="Basic and acidic residues" evidence="7">
    <location>
        <begin position="1"/>
        <end position="11"/>
    </location>
</feature>
<feature type="compositionally biased region" description="Polar residues" evidence="7">
    <location>
        <begin position="408"/>
        <end position="423"/>
    </location>
</feature>
<feature type="compositionally biased region" description="Basic and acidic residues" evidence="7">
    <location>
        <begin position="573"/>
        <end position="583"/>
    </location>
</feature>
<feature type="compositionally biased region" description="Acidic residues" evidence="7">
    <location>
        <begin position="993"/>
        <end position="1024"/>
    </location>
</feature>
<feature type="active site" description="Proton donor" evidence="1">
    <location>
        <position position="713"/>
    </location>
</feature>
<feature type="binding site" evidence="3">
    <location>
        <position position="713"/>
    </location>
    <ligand>
        <name>AMP</name>
        <dbReference type="ChEBI" id="CHEBI:456215"/>
    </ligand>
</feature>
<feature type="binding site" evidence="2">
    <location>
        <position position="717"/>
    </location>
    <ligand>
        <name>Mg(2+)</name>
        <dbReference type="ChEBI" id="CHEBI:18420"/>
        <label>1</label>
    </ligand>
</feature>
<feature type="binding site" evidence="2">
    <location>
        <position position="797"/>
    </location>
    <ligand>
        <name>Mg(2+)</name>
        <dbReference type="ChEBI" id="CHEBI:18420"/>
        <label>1</label>
    </ligand>
</feature>
<feature type="binding site" evidence="3">
    <location>
        <position position="798"/>
    </location>
    <ligand>
        <name>AMP</name>
        <dbReference type="ChEBI" id="CHEBI:456215"/>
    </ligand>
</feature>
<feature type="binding site" evidence="2">
    <location>
        <position position="798"/>
    </location>
    <ligand>
        <name>Mg(2+)</name>
        <dbReference type="ChEBI" id="CHEBI:18420"/>
        <label>1</label>
    </ligand>
</feature>
<feature type="binding site" evidence="2">
    <location>
        <position position="798"/>
    </location>
    <ligand>
        <name>Mg(2+)</name>
        <dbReference type="ChEBI" id="CHEBI:18420"/>
        <label>2</label>
    </ligand>
</feature>
<feature type="binding site" evidence="3">
    <location>
        <position position="913"/>
    </location>
    <ligand>
        <name>AMP</name>
        <dbReference type="ChEBI" id="CHEBI:456215"/>
    </ligand>
</feature>
<feature type="binding site" evidence="2">
    <location>
        <position position="913"/>
    </location>
    <ligand>
        <name>Mg(2+)</name>
        <dbReference type="ChEBI" id="CHEBI:18420"/>
        <label>1</label>
    </ligand>
</feature>
<feature type="binding site" evidence="3">
    <location>
        <position position="964"/>
    </location>
    <ligand>
        <name>AMP</name>
        <dbReference type="ChEBI" id="CHEBI:456215"/>
    </ligand>
</feature>
<feature type="modified residue" description="Phosphoserine" evidence="15">
    <location>
        <position position="15"/>
    </location>
</feature>
<feature type="modified residue" description="Phosphoserine; by PKB/AKT1 or PKB/AKT2" evidence="8 15">
    <location>
        <position position="273"/>
    </location>
</feature>
<feature type="modified residue" description="Phosphoserine" evidence="15">
    <location>
        <position position="274"/>
    </location>
</feature>
<feature type="modified residue" description="Phosphoserine" evidence="2">
    <location>
        <position position="421"/>
    </location>
</feature>
<feature type="mutagenesis site" description="Loss of insulin-induced phosphorylation." evidence="8">
    <original>S</original>
    <variation>A</variation>
    <location>
        <position position="273"/>
    </location>
</feature>
<feature type="sequence conflict" description="In Ref. 1; CAA10639." evidence="12" ref="1">
    <original>A</original>
    <variation>T</variation>
    <location>
        <position position="10"/>
    </location>
</feature>
<feature type="sequence conflict" description="In Ref. 1; CAA10639." evidence="12" ref="1">
    <original>E</original>
    <variation>D</variation>
    <location>
        <position position="261"/>
    </location>
</feature>
<feature type="sequence conflict" description="In Ref. 3; CAA64775." evidence="12" ref="3">
    <original>SGK</original>
    <variation>IPE</variation>
    <location>
        <begin position="288"/>
        <end position="290"/>
    </location>
</feature>
<feature type="sequence conflict" description="In Ref. 1; CAA10639." evidence="12" ref="1">
    <original>S</original>
    <variation>G</variation>
    <location>
        <position position="439"/>
    </location>
</feature>
<feature type="sequence conflict" description="In Ref. 1; CAA10639." evidence="12" ref="1">
    <original>Y</original>
    <variation>H</variation>
    <location>
        <position position="444"/>
    </location>
</feature>
<feature type="sequence conflict" description="In Ref. 1; CAA10639." evidence="12" ref="1">
    <original>F</original>
    <variation>M</variation>
    <location>
        <position position="465"/>
    </location>
</feature>
<feature type="sequence conflict" description="In Ref. 1; CAA10639." evidence="12" ref="1">
    <original>G</original>
    <variation>S</variation>
    <location>
        <position position="756"/>
    </location>
</feature>
<feature type="sequence conflict" description="In Ref. 1; CAA10639 and 3; CAA64775." evidence="12" ref="1 3">
    <original>A</original>
    <variation>T</variation>
    <location>
        <position position="944"/>
    </location>
</feature>
<feature type="sequence conflict" description="In Ref. 3; CAA64775." evidence="12" ref="3">
    <original>A</original>
    <variation>T</variation>
    <location>
        <position position="1082"/>
    </location>
</feature>
<sequence length="1100" mass="122154">MRKDERERDAPAMRSPPPPPASAASPPESLRNGYVKSCVSPLRQDPPRSFFFHLCRFCNVEPPAASLRAGARLSLGVLAAFVLAALLGARPERWAAAAAGLRTLLSACSLSLSPLFSIACAFFFLTCFLTRAQRGPGRGAGSWWLLALPACCYLGDFAAWQWWSWLRGEPAAAGRLCLVLSCVGLLTLAPRVRLRHGVLVLLFAGLVWWVSFSGLGALPPALRPLLSCLVGGAGCLLALGLDHFFHVRGASPPPRSASTAEEKVPVIRPRRRSSCVSLGESAAGYYGSGKMFRRPSLPCISREQMILWDWDLKQWCKPHYQNSGGGNGVDLSVLNEARNMVSDLLIDPSLPPQVISSLRSISSLMGAFSGSCRPKINSFTPFPGFYPCSEVEDPVEKGDRKLHKGLSGRTSFPTPQLRRSSGASSLLTNEHCSRWDRSSGKRSYQELSVSSHGCHLNGPFSSNLFTIPKQRSSSVSLTHHAGLRRAGALPSHSLLNSSSHVPVSAGSLTNRSPIGFPDTTDFLTKPNIILHRSLGSVSSAADFHQYLRNSDSNLCSSCGHQILKYVSTCEPDGTDHPSEKSGEEDSSVFSKEPLNIVETQEEETMKKACRELFLEGDSHLMEEAQQPNIDQEVSLDPMLVEDYDSLIEKMNNWNFQIFELVEKMGEKSGRILSQVMYTLFQDTGLLETFKIPTQEFMNYFRALENGYRDIPYHNRVHATDVLHAVWYLTTRPIPGLPQIHNNHETETKADSDGRLGSGQIAYISSKSCCIPDMSYGCLSSNIPALELMALYVAAAMHDYDHPGRTNAFLVATNAPQAVLYNDRSVLENHHAASAWNLYLSRPEYNFLLNLDHMEFKRFRFLVIEAILATDLKKHFDFLAEFNAKANDVNSNGIEWSSENDRLLVCQVCIKLADINGPAKDRDLHLRWTEGIVNEFYEQGDEEAALGLPISPFMDRSSPQLAKLQESFITHIVGPLCNSYDAAGLLPGQWIETEEGDDTESDDDDDDDDGDGGEELDSDDEETEDNLNPKPQRRKGRRRIFCQLMHHLTENHKIWKEIIEEEEEKCKAEGNKLQVDNASLPQADEIQVIEEADEEEEQMFE</sequence>
<proteinExistence type="evidence at protein level"/>
<reference key="1">
    <citation type="journal article" date="1999" name="Mol. Cell. Biol.">
        <title>Insulin-induced phosphorylation and activation of cyclic nucleotide phosphodiesterase 3B by the serine-threonine kinase Akt.</title>
        <authorList>
            <person name="Kitamura T."/>
            <person name="Kitamura Y."/>
            <person name="Kuroda S."/>
            <person name="Hino Y."/>
            <person name="Ando M."/>
            <person name="Kotani K."/>
            <person name="Konishi H."/>
            <person name="Matsuzaki H."/>
            <person name="Kikkawa U."/>
            <person name="Ogawa W."/>
            <person name="Kasuga M."/>
        </authorList>
    </citation>
    <scope>NUCLEOTIDE SEQUENCE [MRNA]</scope>
    <scope>FUNCTION</scope>
    <scope>CATALYTIC ACTIVITY</scope>
    <scope>SUBCELLULAR LOCATION</scope>
    <scope>PHOSPHORYLATION AT SER-273</scope>
    <scope>MUTAGENESIS OF SER-273</scope>
</reference>
<reference key="2">
    <citation type="journal article" date="2006" name="J. Biol. Chem.">
        <title>Importance of cAMP-response element-binding protein in regulation of expression of the murine cyclic nucleotide phosphodiesterase 3B (Pde3b) gene in differentiating 3T3-L1 preadipocytes.</title>
        <authorList>
            <person name="Liu H."/>
            <person name="Tang J.R."/>
            <person name="Choi Y.H."/>
            <person name="Napolitano M."/>
            <person name="Hockman S."/>
            <person name="Taira M."/>
            <person name="Degerman E."/>
            <person name="Manganiello V.C."/>
        </authorList>
    </citation>
    <scope>NUCLEOTIDE SEQUENCE [MRNA]</scope>
</reference>
<reference key="3">
    <citation type="journal article" date="1996" name="Genomics">
        <title>Molecular cloning and chromosomal assignment of the human homologue of the rat cGMP-inhibited phosphodiesterase 1 (PDE3A) -- a gene involved in fat metabolism located at 11p15.1.</title>
        <authorList>
            <person name="Loebbert R.W."/>
            <person name="Winterpacht A."/>
            <person name="Seipel B."/>
            <person name="Zabel B.U."/>
        </authorList>
    </citation>
    <scope>NUCLEOTIDE SEQUENCE [MRNA] OF 287-1085</scope>
    <scope>TISSUE SPECIFICITY</scope>
    <source>
        <strain>SWR/J</strain>
        <tissue>Adipose tissue</tissue>
    </source>
</reference>
<reference key="4">
    <citation type="journal article" date="2004" name="Cell">
        <title>PI3Kgamma modulates the cardiac response to chronic pressure overload by distinct kinase-dependent and -independent effects.</title>
        <authorList>
            <person name="Patrucco E."/>
            <person name="Notte A."/>
            <person name="Barberis L."/>
            <person name="Selvetella G."/>
            <person name="Maffei A."/>
            <person name="Brancaccio M."/>
            <person name="Marengo S."/>
            <person name="Russo G."/>
            <person name="Azzolino O."/>
            <person name="Rybalkin S.D."/>
            <person name="Silengo L."/>
            <person name="Altruda F."/>
            <person name="Wetzker R."/>
            <person name="Wymann M.P."/>
            <person name="Lembo G."/>
            <person name="Hirsch E."/>
        </authorList>
    </citation>
    <scope>FUNCTION</scope>
    <scope>INTERACTION WITH PIK3CG</scope>
</reference>
<reference key="5">
    <citation type="journal article" date="2010" name="Cell">
        <title>A tissue-specific atlas of mouse protein phosphorylation and expression.</title>
        <authorList>
            <person name="Huttlin E.L."/>
            <person name="Jedrychowski M.P."/>
            <person name="Elias J.E."/>
            <person name="Goswami T."/>
            <person name="Rad R."/>
            <person name="Beausoleil S.A."/>
            <person name="Villen J."/>
            <person name="Haas W."/>
            <person name="Sowa M.E."/>
            <person name="Gygi S.P."/>
        </authorList>
    </citation>
    <scope>PHOSPHORYLATION [LARGE SCALE ANALYSIS] AT SER-15; SER-273 AND SER-274</scope>
    <scope>IDENTIFICATION BY MASS SPECTROMETRY [LARGE SCALE ANALYSIS]</scope>
    <source>
        <tissue>Brown adipose tissue</tissue>
        <tissue>Liver</tissue>
    </source>
</reference>
<reference key="6">
    <citation type="journal article" date="2018" name="Cell Rep.">
        <title>Loss of ABHD15 Impairs the Anti-lipolytic Action of Insulin by Altering PDE3B Stability and Contributes to Insulin Resistance.</title>
        <authorList>
            <person name="Xia W."/>
            <person name="Pessentheiner A.R."/>
            <person name="Hofer D.C."/>
            <person name="Amor M."/>
            <person name="Schreiber R."/>
            <person name="Schoiswohl G."/>
            <person name="Eichmann T.O."/>
            <person name="Walenta E."/>
            <person name="Itariu B."/>
            <person name="Prager G."/>
            <person name="Hackl H."/>
            <person name="Stulnig T."/>
            <person name="Kratky D."/>
            <person name="Ruelicke T."/>
            <person name="Bogner-Strauss J.G."/>
        </authorList>
    </citation>
    <scope>INTERACTION WITH ABHD15</scope>
</reference>
<keyword id="KW-0037">Angiogenesis</keyword>
<keyword id="KW-0114">cAMP</keyword>
<keyword id="KW-0140">cGMP</keyword>
<keyword id="KW-0175">Coiled coil</keyword>
<keyword id="KW-0378">Hydrolase</keyword>
<keyword id="KW-0460">Magnesium</keyword>
<keyword id="KW-0472">Membrane</keyword>
<keyword id="KW-0479">Metal-binding</keyword>
<keyword id="KW-0597">Phosphoprotein</keyword>
<keyword id="KW-1185">Reference proteome</keyword>
<keyword id="KW-0812">Transmembrane</keyword>
<keyword id="KW-1133">Transmembrane helix</keyword>
<accession>Q61409</accession>
<accession>Q8CIX5</accession>
<accession>Q9Z1J9</accession>